<proteinExistence type="inferred from homology"/>
<gene>
    <name evidence="1" type="primary">rpsB</name>
    <name type="ordered locus">SSPA0215</name>
</gene>
<feature type="chain" id="PRO_1000115056" description="Small ribosomal subunit protein uS2">
    <location>
        <begin position="1"/>
        <end position="241"/>
    </location>
</feature>
<sequence length="241" mass="26759">MATVSMRDMLKAGVHFGHQTRYWNPKMKPFIFGARNKVHIINLEKTVPMFNEALAELNKISARKGKILFVGTKRAASEAVKEAANSCDQFFVNHRWLGGMLTNWKTVRQSIKRLKDLETQSQDGTFEKLTKKEALMRTRELEKLENSLGGIKDMGGLPDALFVIDADHEHIAIKEANNLGIPVFAIVDTNSDPDGVDFVIPGNDDAIRAVSLYLGAVAATVREGRSQDLASQAEESFVEAE</sequence>
<accession>B5BAM6</accession>
<evidence type="ECO:0000255" key="1">
    <source>
        <dbReference type="HAMAP-Rule" id="MF_00291"/>
    </source>
</evidence>
<evidence type="ECO:0000305" key="2"/>
<reference key="1">
    <citation type="journal article" date="2009" name="BMC Genomics">
        <title>Pseudogene accumulation in the evolutionary histories of Salmonella enterica serovars Paratyphi A and Typhi.</title>
        <authorList>
            <person name="Holt K.E."/>
            <person name="Thomson N.R."/>
            <person name="Wain J."/>
            <person name="Langridge G.C."/>
            <person name="Hasan R."/>
            <person name="Bhutta Z.A."/>
            <person name="Quail M.A."/>
            <person name="Norbertczak H."/>
            <person name="Walker D."/>
            <person name="Simmonds M."/>
            <person name="White B."/>
            <person name="Bason N."/>
            <person name="Mungall K."/>
            <person name="Dougan G."/>
            <person name="Parkhill J."/>
        </authorList>
    </citation>
    <scope>NUCLEOTIDE SEQUENCE [LARGE SCALE GENOMIC DNA]</scope>
    <source>
        <strain>AKU_12601</strain>
    </source>
</reference>
<protein>
    <recommendedName>
        <fullName evidence="1">Small ribosomal subunit protein uS2</fullName>
    </recommendedName>
    <alternativeName>
        <fullName evidence="2">30S ribosomal protein S2</fullName>
    </alternativeName>
</protein>
<organism>
    <name type="scientific">Salmonella paratyphi A (strain AKU_12601)</name>
    <dbReference type="NCBI Taxonomy" id="554290"/>
    <lineage>
        <taxon>Bacteria</taxon>
        <taxon>Pseudomonadati</taxon>
        <taxon>Pseudomonadota</taxon>
        <taxon>Gammaproteobacteria</taxon>
        <taxon>Enterobacterales</taxon>
        <taxon>Enterobacteriaceae</taxon>
        <taxon>Salmonella</taxon>
    </lineage>
</organism>
<keyword id="KW-0687">Ribonucleoprotein</keyword>
<keyword id="KW-0689">Ribosomal protein</keyword>
<comment type="similarity">
    <text evidence="1">Belongs to the universal ribosomal protein uS2 family.</text>
</comment>
<name>RS2_SALPK</name>
<dbReference type="EMBL" id="FM200053">
    <property type="protein sequence ID" value="CAR58329.1"/>
    <property type="molecule type" value="Genomic_DNA"/>
</dbReference>
<dbReference type="RefSeq" id="WP_000246886.1">
    <property type="nucleotide sequence ID" value="NC_011147.1"/>
</dbReference>
<dbReference type="SMR" id="B5BAM6"/>
<dbReference type="KEGG" id="sek:SSPA0215"/>
<dbReference type="HOGENOM" id="CLU_040318_1_0_6"/>
<dbReference type="Proteomes" id="UP000001869">
    <property type="component" value="Chromosome"/>
</dbReference>
<dbReference type="GO" id="GO:0022627">
    <property type="term" value="C:cytosolic small ribosomal subunit"/>
    <property type="evidence" value="ECO:0007669"/>
    <property type="project" value="TreeGrafter"/>
</dbReference>
<dbReference type="GO" id="GO:0003735">
    <property type="term" value="F:structural constituent of ribosome"/>
    <property type="evidence" value="ECO:0007669"/>
    <property type="project" value="InterPro"/>
</dbReference>
<dbReference type="GO" id="GO:0006412">
    <property type="term" value="P:translation"/>
    <property type="evidence" value="ECO:0007669"/>
    <property type="project" value="UniProtKB-UniRule"/>
</dbReference>
<dbReference type="CDD" id="cd01425">
    <property type="entry name" value="RPS2"/>
    <property type="match status" value="1"/>
</dbReference>
<dbReference type="FunFam" id="1.10.287.610:FF:000001">
    <property type="entry name" value="30S ribosomal protein S2"/>
    <property type="match status" value="1"/>
</dbReference>
<dbReference type="Gene3D" id="3.40.50.10490">
    <property type="entry name" value="Glucose-6-phosphate isomerase like protein, domain 1"/>
    <property type="match status" value="1"/>
</dbReference>
<dbReference type="Gene3D" id="1.10.287.610">
    <property type="entry name" value="Helix hairpin bin"/>
    <property type="match status" value="1"/>
</dbReference>
<dbReference type="HAMAP" id="MF_00291_B">
    <property type="entry name" value="Ribosomal_uS2_B"/>
    <property type="match status" value="1"/>
</dbReference>
<dbReference type="InterPro" id="IPR001865">
    <property type="entry name" value="Ribosomal_uS2"/>
</dbReference>
<dbReference type="InterPro" id="IPR005706">
    <property type="entry name" value="Ribosomal_uS2_bac/mit/plastid"/>
</dbReference>
<dbReference type="InterPro" id="IPR018130">
    <property type="entry name" value="Ribosomal_uS2_CS"/>
</dbReference>
<dbReference type="InterPro" id="IPR023591">
    <property type="entry name" value="Ribosomal_uS2_flav_dom_sf"/>
</dbReference>
<dbReference type="NCBIfam" id="TIGR01011">
    <property type="entry name" value="rpsB_bact"/>
    <property type="match status" value="1"/>
</dbReference>
<dbReference type="PANTHER" id="PTHR12534">
    <property type="entry name" value="30S RIBOSOMAL PROTEIN S2 PROKARYOTIC AND ORGANELLAR"/>
    <property type="match status" value="1"/>
</dbReference>
<dbReference type="PANTHER" id="PTHR12534:SF0">
    <property type="entry name" value="SMALL RIBOSOMAL SUBUNIT PROTEIN US2M"/>
    <property type="match status" value="1"/>
</dbReference>
<dbReference type="Pfam" id="PF00318">
    <property type="entry name" value="Ribosomal_S2"/>
    <property type="match status" value="1"/>
</dbReference>
<dbReference type="PRINTS" id="PR00395">
    <property type="entry name" value="RIBOSOMALS2"/>
</dbReference>
<dbReference type="SUPFAM" id="SSF52313">
    <property type="entry name" value="Ribosomal protein S2"/>
    <property type="match status" value="1"/>
</dbReference>
<dbReference type="PROSITE" id="PS00962">
    <property type="entry name" value="RIBOSOMAL_S2_1"/>
    <property type="match status" value="1"/>
</dbReference>
<dbReference type="PROSITE" id="PS00963">
    <property type="entry name" value="RIBOSOMAL_S2_2"/>
    <property type="match status" value="1"/>
</dbReference>